<evidence type="ECO:0000250" key="1"/>
<evidence type="ECO:0000255" key="2"/>
<evidence type="ECO:0000255" key="3">
    <source>
        <dbReference type="PROSITE-ProRule" id="PRU00628"/>
    </source>
</evidence>
<evidence type="ECO:0000256" key="4">
    <source>
        <dbReference type="SAM" id="MobiDB-lite"/>
    </source>
</evidence>
<evidence type="ECO:0000305" key="5"/>
<evidence type="ECO:0007829" key="6">
    <source>
        <dbReference type="PDB" id="6XI0"/>
    </source>
</evidence>
<reference key="1">
    <citation type="journal article" date="1987" name="J. Mol. Biol.">
        <title>Primary structure of the bc1 complex of Rhodopseudomonas capsulata. Nucleotide sequence of the pet operon encoding the Rieske cytochrome b, and cytochrome c1 apoproteins.</title>
        <authorList>
            <person name="Davidson E."/>
            <person name="Daldal F."/>
        </authorList>
    </citation>
    <scope>NUCLEOTIDE SEQUENCE [GENOMIC DNA]</scope>
    <source>
        <strain>ATCC BAA-309 / NBRC 16581 / SB1003</strain>
    </source>
</reference>
<reference key="2">
    <citation type="journal article" date="2010" name="J. Bacteriol.">
        <title>Complete genome sequence of the photosynthetic purple nonsulfur bacterium Rhodobacter capsulatus SB 1003.</title>
        <authorList>
            <person name="Strnad H."/>
            <person name="Lapidus A."/>
            <person name="Paces J."/>
            <person name="Ulbrich P."/>
            <person name="Vlcek C."/>
            <person name="Paces V."/>
            <person name="Haselkorn R."/>
        </authorList>
    </citation>
    <scope>NUCLEOTIDE SEQUENCE [LARGE SCALE GENOMIC DNA]</scope>
    <source>
        <strain>ATCC BAA-309 / NBRC 16581 / SB1003</strain>
    </source>
</reference>
<reference key="3">
    <citation type="journal article" date="1992" name="Mol. Microbiol.">
        <title>petR, located upstream of the fbcFBC operon encoding the cytochrome bc1 complex, is homologous to bacterial response regulators and necessary for photosynthetic and respiratory growth of Rhodobacter capsulatus.</title>
        <authorList>
            <person name="Tokito M.K."/>
            <person name="Daldal F."/>
        </authorList>
    </citation>
    <scope>NUCLEOTIDE SEQUENCE [GENOMIC DNA] OF 1-23</scope>
    <source>
        <strain>MT1131</strain>
    </source>
</reference>
<organism>
    <name type="scientific">Rhodobacter capsulatus (strain ATCC BAA-309 / NBRC 16581 / SB1003)</name>
    <dbReference type="NCBI Taxonomy" id="272942"/>
    <lineage>
        <taxon>Bacteria</taxon>
        <taxon>Pseudomonadati</taxon>
        <taxon>Pseudomonadota</taxon>
        <taxon>Alphaproteobacteria</taxon>
        <taxon>Rhodobacterales</taxon>
        <taxon>Rhodobacter group</taxon>
        <taxon>Rhodobacter</taxon>
    </lineage>
</organism>
<sequence length="191" mass="20440">MSHAEDNAGTRRDFLYHATAATGVVVTGAAVWPLINQMNASADVKAMASIFVDVSAVEVGTQLTVKWRGKPVFIRRRDEKDIELARSVPLGALRDTSAENANKPGAEATDENRTLPAFDGTNTGEWLVMLGVCTHLGCVPMGDKSGDFGGWFCPCHGSHYDSAGRIRKGPAPRNLDIPVAAFVDETTIKLG</sequence>
<dbReference type="EC" id="7.1.1.8"/>
<dbReference type="EMBL" id="X05630">
    <property type="protein sequence ID" value="CAA29116.1"/>
    <property type="molecule type" value="Genomic_DNA"/>
</dbReference>
<dbReference type="EMBL" id="CP001312">
    <property type="protein sequence ID" value="ADE86497.1"/>
    <property type="molecule type" value="Genomic_DNA"/>
</dbReference>
<dbReference type="EMBL" id="Z12113">
    <property type="protein sequence ID" value="CAA78099.1"/>
    <property type="molecule type" value="Genomic_DNA"/>
</dbReference>
<dbReference type="PIR" id="A29336">
    <property type="entry name" value="A29336"/>
</dbReference>
<dbReference type="RefSeq" id="WP_013068475.1">
    <property type="nucleotide sequence ID" value="NC_014034.1"/>
</dbReference>
<dbReference type="PDB" id="6XI0">
    <property type="method" value="EM"/>
    <property type="resolution" value="3.30 A"/>
    <property type="chains" value="E/R=1-191"/>
</dbReference>
<dbReference type="PDB" id="6XKT">
    <property type="method" value="EM"/>
    <property type="resolution" value="3.75 A"/>
    <property type="chains" value="E/R=1-191"/>
</dbReference>
<dbReference type="PDB" id="6XKU">
    <property type="method" value="EM"/>
    <property type="resolution" value="4.20 A"/>
    <property type="chains" value="E/R=1-191"/>
</dbReference>
<dbReference type="PDB" id="6XKV">
    <property type="method" value="EM"/>
    <property type="resolution" value="3.50 A"/>
    <property type="chains" value="E/R=1-191"/>
</dbReference>
<dbReference type="PDB" id="6XKW">
    <property type="method" value="EM"/>
    <property type="resolution" value="5.20 A"/>
    <property type="chains" value="E/R=1-191"/>
</dbReference>
<dbReference type="PDB" id="6XKX">
    <property type="method" value="EM"/>
    <property type="resolution" value="6.10 A"/>
    <property type="chains" value="E/R=1-191"/>
</dbReference>
<dbReference type="PDB" id="6XKZ">
    <property type="method" value="EM"/>
    <property type="resolution" value="7.20 A"/>
    <property type="chains" value="E/R=1-191"/>
</dbReference>
<dbReference type="PDBsum" id="6XI0"/>
<dbReference type="PDBsum" id="6XKT"/>
<dbReference type="PDBsum" id="6XKU"/>
<dbReference type="PDBsum" id="6XKV"/>
<dbReference type="PDBsum" id="6XKW"/>
<dbReference type="PDBsum" id="6XKX"/>
<dbReference type="PDBsum" id="6XKZ"/>
<dbReference type="EMDB" id="EMD-22189"/>
<dbReference type="EMDB" id="EMD-22224"/>
<dbReference type="EMDB" id="EMD-22225"/>
<dbReference type="EMDB" id="EMD-22226"/>
<dbReference type="EMDB" id="EMD-22227"/>
<dbReference type="EMDB" id="EMD-22228"/>
<dbReference type="EMDB" id="EMD-22230"/>
<dbReference type="SMR" id="D5ANZ2"/>
<dbReference type="STRING" id="272942.RCAP_rcc02768"/>
<dbReference type="GeneID" id="31491586"/>
<dbReference type="KEGG" id="rcp:RCAP_rcc02768"/>
<dbReference type="eggNOG" id="COG0723">
    <property type="taxonomic scope" value="Bacteria"/>
</dbReference>
<dbReference type="HOGENOM" id="CLU_055690_0_2_5"/>
<dbReference type="OrthoDB" id="9767869at2"/>
<dbReference type="Proteomes" id="UP000002361">
    <property type="component" value="Chromosome"/>
</dbReference>
<dbReference type="GO" id="GO:0005886">
    <property type="term" value="C:plasma membrane"/>
    <property type="evidence" value="ECO:0007669"/>
    <property type="project" value="UniProtKB-SubCell"/>
</dbReference>
<dbReference type="GO" id="GO:0051537">
    <property type="term" value="F:2 iron, 2 sulfur cluster binding"/>
    <property type="evidence" value="ECO:0007669"/>
    <property type="project" value="UniProtKB-KW"/>
</dbReference>
<dbReference type="GO" id="GO:0046872">
    <property type="term" value="F:metal ion binding"/>
    <property type="evidence" value="ECO:0007669"/>
    <property type="project" value="UniProtKB-KW"/>
</dbReference>
<dbReference type="GO" id="GO:0008121">
    <property type="term" value="F:ubiquinol-cytochrome-c reductase activity"/>
    <property type="evidence" value="ECO:0007669"/>
    <property type="project" value="UniProtKB-EC"/>
</dbReference>
<dbReference type="CDD" id="cd03470">
    <property type="entry name" value="Rieske_cytochrome_bc1"/>
    <property type="match status" value="1"/>
</dbReference>
<dbReference type="FunFam" id="2.102.10.10:FF:000001">
    <property type="entry name" value="Cytochrome b-c1 complex subunit Rieske, mitochondrial"/>
    <property type="match status" value="1"/>
</dbReference>
<dbReference type="Gene3D" id="2.102.10.10">
    <property type="entry name" value="Rieske [2Fe-2S] iron-sulphur domain"/>
    <property type="match status" value="1"/>
</dbReference>
<dbReference type="Gene3D" id="1.20.5.510">
    <property type="entry name" value="Single helix bin"/>
    <property type="match status" value="1"/>
</dbReference>
<dbReference type="InterPro" id="IPR017941">
    <property type="entry name" value="Rieske_2Fe-2S"/>
</dbReference>
<dbReference type="InterPro" id="IPR036922">
    <property type="entry name" value="Rieske_2Fe-2S_sf"/>
</dbReference>
<dbReference type="InterPro" id="IPR014349">
    <property type="entry name" value="Rieske_Fe-S_prot"/>
</dbReference>
<dbReference type="InterPro" id="IPR005805">
    <property type="entry name" value="Rieske_Fe-S_prot_C"/>
</dbReference>
<dbReference type="InterPro" id="IPR006311">
    <property type="entry name" value="TAT_signal"/>
</dbReference>
<dbReference type="InterPro" id="IPR019546">
    <property type="entry name" value="TAT_signal_bac_arc"/>
</dbReference>
<dbReference type="InterPro" id="IPR019470">
    <property type="entry name" value="Ubiq_cytC_Rdtase_Fe-S_su_TAT"/>
</dbReference>
<dbReference type="InterPro" id="IPR006317">
    <property type="entry name" value="Ubiquinol_cyt_c_Rdtase_Fe-S-su"/>
</dbReference>
<dbReference type="NCBIfam" id="TIGR01416">
    <property type="entry name" value="Rieske_proteo"/>
    <property type="match status" value="1"/>
</dbReference>
<dbReference type="NCBIfam" id="TIGR01409">
    <property type="entry name" value="TAT_signal_seq"/>
    <property type="match status" value="1"/>
</dbReference>
<dbReference type="PANTHER" id="PTHR10134">
    <property type="entry name" value="CYTOCHROME B-C1 COMPLEX SUBUNIT RIESKE, MITOCHONDRIAL"/>
    <property type="match status" value="1"/>
</dbReference>
<dbReference type="Pfam" id="PF00355">
    <property type="entry name" value="Rieske"/>
    <property type="match status" value="1"/>
</dbReference>
<dbReference type="Pfam" id="PF10399">
    <property type="entry name" value="UCR_Fe-S_N"/>
    <property type="match status" value="1"/>
</dbReference>
<dbReference type="PRINTS" id="PR00162">
    <property type="entry name" value="RIESKE"/>
</dbReference>
<dbReference type="SUPFAM" id="SSF50022">
    <property type="entry name" value="ISP domain"/>
    <property type="match status" value="1"/>
</dbReference>
<dbReference type="PROSITE" id="PS51296">
    <property type="entry name" value="RIESKE"/>
    <property type="match status" value="1"/>
</dbReference>
<dbReference type="PROSITE" id="PS51318">
    <property type="entry name" value="TAT"/>
    <property type="match status" value="1"/>
</dbReference>
<keyword id="KW-0001">2Fe-2S</keyword>
<keyword id="KW-0002">3D-structure</keyword>
<keyword id="KW-1003">Cell membrane</keyword>
<keyword id="KW-1015">Disulfide bond</keyword>
<keyword id="KW-0249">Electron transport</keyword>
<keyword id="KW-0408">Iron</keyword>
<keyword id="KW-0411">Iron-sulfur</keyword>
<keyword id="KW-0472">Membrane</keyword>
<keyword id="KW-0479">Metal-binding</keyword>
<keyword id="KW-1185">Reference proteome</keyword>
<keyword id="KW-1278">Translocase</keyword>
<keyword id="KW-0812">Transmembrane</keyword>
<keyword id="KW-1133">Transmembrane helix</keyword>
<keyword id="KW-0813">Transport</keyword>
<proteinExistence type="evidence at protein level"/>
<protein>
    <recommendedName>
        <fullName>Ubiquinol-cytochrome c reductase iron-sulfur subunit</fullName>
        <ecNumber>7.1.1.8</ecNumber>
    </recommendedName>
    <alternativeName>
        <fullName>Rieske iron-sulfur protein</fullName>
        <shortName>RISP</shortName>
    </alternativeName>
</protein>
<feature type="chain" id="PRO_0000409865" description="Ubiquinol-cytochrome c reductase iron-sulfur subunit">
    <location>
        <begin position="1"/>
        <end position="191"/>
    </location>
</feature>
<feature type="transmembrane region" description="Helical" evidence="2">
    <location>
        <begin position="18"/>
        <end position="35"/>
    </location>
</feature>
<feature type="domain" description="Rieske" evidence="3">
    <location>
        <begin position="94"/>
        <end position="189"/>
    </location>
</feature>
<feature type="region of interest" description="Disordered" evidence="4">
    <location>
        <begin position="95"/>
        <end position="116"/>
    </location>
</feature>
<feature type="binding site" evidence="3">
    <location>
        <position position="133"/>
    </location>
    <ligand>
        <name>[2Fe-2S] cluster</name>
        <dbReference type="ChEBI" id="CHEBI:190135"/>
    </ligand>
</feature>
<feature type="binding site" evidence="3">
    <location>
        <position position="135"/>
    </location>
    <ligand>
        <name>[2Fe-2S] cluster</name>
        <dbReference type="ChEBI" id="CHEBI:190135"/>
    </ligand>
</feature>
<feature type="binding site" evidence="3">
    <location>
        <position position="153"/>
    </location>
    <ligand>
        <name>[2Fe-2S] cluster</name>
        <dbReference type="ChEBI" id="CHEBI:190135"/>
    </ligand>
</feature>
<feature type="binding site" evidence="3">
    <location>
        <position position="156"/>
    </location>
    <ligand>
        <name>[2Fe-2S] cluster</name>
        <dbReference type="ChEBI" id="CHEBI:190135"/>
    </ligand>
</feature>
<feature type="disulfide bond" evidence="3">
    <location>
        <begin position="138"/>
        <end position="155"/>
    </location>
</feature>
<feature type="helix" evidence="6">
    <location>
        <begin position="12"/>
        <end position="36"/>
    </location>
</feature>
<feature type="helix" evidence="6">
    <location>
        <begin position="42"/>
        <end position="45"/>
    </location>
</feature>
<feature type="strand" evidence="6">
    <location>
        <begin position="50"/>
        <end position="52"/>
    </location>
</feature>
<feature type="strand" evidence="6">
    <location>
        <begin position="64"/>
        <end position="67"/>
    </location>
</feature>
<feature type="strand" evidence="6">
    <location>
        <begin position="70"/>
        <end position="76"/>
    </location>
</feature>
<feature type="helix" evidence="6">
    <location>
        <begin position="79"/>
        <end position="86"/>
    </location>
</feature>
<feature type="helix" evidence="6">
    <location>
        <begin position="110"/>
        <end position="113"/>
    </location>
</feature>
<feature type="strand" evidence="6">
    <location>
        <begin position="126"/>
        <end position="130"/>
    </location>
</feature>
<feature type="turn" evidence="6">
    <location>
        <begin position="134"/>
        <end position="136"/>
    </location>
</feature>
<feature type="strand" evidence="6">
    <location>
        <begin position="141"/>
        <end position="145"/>
    </location>
</feature>
<feature type="turn" evidence="6">
    <location>
        <begin position="146"/>
        <end position="149"/>
    </location>
</feature>
<feature type="strand" evidence="6">
    <location>
        <begin position="150"/>
        <end position="153"/>
    </location>
</feature>
<feature type="turn" evidence="6">
    <location>
        <begin position="154"/>
        <end position="157"/>
    </location>
</feature>
<feature type="strand" evidence="6">
    <location>
        <begin position="158"/>
        <end position="160"/>
    </location>
</feature>
<feature type="strand" evidence="6">
    <location>
        <begin position="166"/>
        <end position="170"/>
    </location>
</feature>
<feature type="strand" evidence="6">
    <location>
        <begin position="180"/>
        <end position="186"/>
    </location>
</feature>
<feature type="strand" evidence="6">
    <location>
        <begin position="188"/>
        <end position="190"/>
    </location>
</feature>
<name>UCRI_RHOCB</name>
<comment type="function">
    <text evidence="1">Component of the ubiquinol-cytochrome c reductase complex (complex III or cytochrome b-c1 complex), which is a respiratory chain that generates an electrochemical potential coupled to ATP synthesis.</text>
</comment>
<comment type="catalytic activity">
    <reaction>
        <text>a quinol + 2 Fe(III)-[cytochrome c](out) = a quinone + 2 Fe(II)-[cytochrome c](out) + 2 H(+)(out)</text>
        <dbReference type="Rhea" id="RHEA:11484"/>
        <dbReference type="Rhea" id="RHEA-COMP:10350"/>
        <dbReference type="Rhea" id="RHEA-COMP:14399"/>
        <dbReference type="ChEBI" id="CHEBI:15378"/>
        <dbReference type="ChEBI" id="CHEBI:24646"/>
        <dbReference type="ChEBI" id="CHEBI:29033"/>
        <dbReference type="ChEBI" id="CHEBI:29034"/>
        <dbReference type="ChEBI" id="CHEBI:132124"/>
        <dbReference type="EC" id="7.1.1.8"/>
    </reaction>
</comment>
<comment type="cofactor">
    <cofactor evidence="3">
        <name>[2Fe-2S] cluster</name>
        <dbReference type="ChEBI" id="CHEBI:190135"/>
    </cofactor>
    <text evidence="3">Binds 1 [2Fe-2S] cluster per subunit.</text>
</comment>
<comment type="subunit">
    <text evidence="1">The main subunits of complex b-c1 are: cytochrome b, cytochrome c1 and the Rieske protein.</text>
</comment>
<comment type="subcellular location">
    <subcellularLocation>
        <location evidence="1">Cell membrane</location>
        <topology evidence="1">Single-pass membrane protein</topology>
    </subcellularLocation>
</comment>
<comment type="miscellaneous">
    <text evidence="1">The Rieske protein is a high potential 2Fe-2S protein.</text>
</comment>
<comment type="similarity">
    <text evidence="5">Belongs to the Rieske iron-sulfur protein family.</text>
</comment>
<gene>
    <name type="primary">petA</name>
    <name type="synonym">fbcF</name>
    <name type="ordered locus">RCAP_rcc02768</name>
</gene>
<accession>D5ANZ2</accession>
<accession>P07055</accession>
<accession>P08500</accession>